<sequence>MTELKNDRYLRALLRQPVDVTPVWMMRQAGRYLPEYKATRAQAGDFMSLCKNAELACEVTLQPLRRYPLDAAILFSDILTVPDAMGLGLYFEAGEGPRFTAPVTCKADVDKLPIPDPEDELGYVMNAVRTIRRELKGEVPLIGFSGSPWTLATYMVEGGSSKAFTVIKKMMYADPQALHLLLDKLAKSVTLYLNAQIKAGAQSVMIFDTWGGVLTGRDYQQFSLYYMHKIVDGLLRENDGRRVPVTLFTKGGGQWLEAMAETGCDALGLDWTTDIADARRRVGHKVALQGNMDPSMLYAPPARIEDEVATILAGFGQGEGHVFNLGHGIHQDVPPEHAGAFVEAVHRLSAQYHN</sequence>
<organism>
    <name type="scientific">Salmonella newport (strain SL254)</name>
    <dbReference type="NCBI Taxonomy" id="423368"/>
    <lineage>
        <taxon>Bacteria</taxon>
        <taxon>Pseudomonadati</taxon>
        <taxon>Pseudomonadota</taxon>
        <taxon>Gammaproteobacteria</taxon>
        <taxon>Enterobacterales</taxon>
        <taxon>Enterobacteriaceae</taxon>
        <taxon>Salmonella</taxon>
    </lineage>
</organism>
<dbReference type="EC" id="4.1.1.37" evidence="1"/>
<dbReference type="EMBL" id="CP001113">
    <property type="protein sequence ID" value="ACF64188.1"/>
    <property type="molecule type" value="Genomic_DNA"/>
</dbReference>
<dbReference type="RefSeq" id="WP_000137628.1">
    <property type="nucleotide sequence ID" value="NZ_CCMR01000001.1"/>
</dbReference>
<dbReference type="SMR" id="B4T0Z9"/>
<dbReference type="KEGG" id="see:SNSL254_A4500"/>
<dbReference type="HOGENOM" id="CLU_040933_0_0_6"/>
<dbReference type="UniPathway" id="UPA00251">
    <property type="reaction ID" value="UER00321"/>
</dbReference>
<dbReference type="Proteomes" id="UP000008824">
    <property type="component" value="Chromosome"/>
</dbReference>
<dbReference type="GO" id="GO:0005829">
    <property type="term" value="C:cytosol"/>
    <property type="evidence" value="ECO:0007669"/>
    <property type="project" value="TreeGrafter"/>
</dbReference>
<dbReference type="GO" id="GO:0004853">
    <property type="term" value="F:uroporphyrinogen decarboxylase activity"/>
    <property type="evidence" value="ECO:0007669"/>
    <property type="project" value="UniProtKB-UniRule"/>
</dbReference>
<dbReference type="GO" id="GO:0019353">
    <property type="term" value="P:protoporphyrinogen IX biosynthetic process from glutamate"/>
    <property type="evidence" value="ECO:0007669"/>
    <property type="project" value="TreeGrafter"/>
</dbReference>
<dbReference type="CDD" id="cd00717">
    <property type="entry name" value="URO-D"/>
    <property type="match status" value="1"/>
</dbReference>
<dbReference type="FunFam" id="3.20.20.210:FF:000001">
    <property type="entry name" value="Uroporphyrinogen decarboxylase"/>
    <property type="match status" value="1"/>
</dbReference>
<dbReference type="Gene3D" id="3.20.20.210">
    <property type="match status" value="1"/>
</dbReference>
<dbReference type="HAMAP" id="MF_00218">
    <property type="entry name" value="URO_D"/>
    <property type="match status" value="1"/>
</dbReference>
<dbReference type="InterPro" id="IPR038071">
    <property type="entry name" value="UROD/MetE-like_sf"/>
</dbReference>
<dbReference type="InterPro" id="IPR006361">
    <property type="entry name" value="Uroporphyrinogen_deCO2ase_HemE"/>
</dbReference>
<dbReference type="InterPro" id="IPR000257">
    <property type="entry name" value="Uroporphyrinogen_deCOase"/>
</dbReference>
<dbReference type="NCBIfam" id="TIGR01464">
    <property type="entry name" value="hemE"/>
    <property type="match status" value="1"/>
</dbReference>
<dbReference type="PANTHER" id="PTHR21091">
    <property type="entry name" value="METHYLTETRAHYDROFOLATE:HOMOCYSTEINE METHYLTRANSFERASE RELATED"/>
    <property type="match status" value="1"/>
</dbReference>
<dbReference type="PANTHER" id="PTHR21091:SF169">
    <property type="entry name" value="UROPORPHYRINOGEN DECARBOXYLASE"/>
    <property type="match status" value="1"/>
</dbReference>
<dbReference type="Pfam" id="PF01208">
    <property type="entry name" value="URO-D"/>
    <property type="match status" value="1"/>
</dbReference>
<dbReference type="SUPFAM" id="SSF51726">
    <property type="entry name" value="UROD/MetE-like"/>
    <property type="match status" value="1"/>
</dbReference>
<dbReference type="PROSITE" id="PS00906">
    <property type="entry name" value="UROD_1"/>
    <property type="match status" value="1"/>
</dbReference>
<dbReference type="PROSITE" id="PS00907">
    <property type="entry name" value="UROD_2"/>
    <property type="match status" value="1"/>
</dbReference>
<name>DCUP_SALNS</name>
<reference key="1">
    <citation type="journal article" date="2011" name="J. Bacteriol.">
        <title>Comparative genomics of 28 Salmonella enterica isolates: evidence for CRISPR-mediated adaptive sublineage evolution.</title>
        <authorList>
            <person name="Fricke W.F."/>
            <person name="Mammel M.K."/>
            <person name="McDermott P.F."/>
            <person name="Tartera C."/>
            <person name="White D.G."/>
            <person name="Leclerc J.E."/>
            <person name="Ravel J."/>
            <person name="Cebula T.A."/>
        </authorList>
    </citation>
    <scope>NUCLEOTIDE SEQUENCE [LARGE SCALE GENOMIC DNA]</scope>
    <source>
        <strain>SL254</strain>
    </source>
</reference>
<evidence type="ECO:0000255" key="1">
    <source>
        <dbReference type="HAMAP-Rule" id="MF_00218"/>
    </source>
</evidence>
<gene>
    <name evidence="1" type="primary">hemE</name>
    <name type="ordered locus">SNSL254_A4500</name>
</gene>
<accession>B4T0Z9</accession>
<keyword id="KW-0963">Cytoplasm</keyword>
<keyword id="KW-0210">Decarboxylase</keyword>
<keyword id="KW-0456">Lyase</keyword>
<keyword id="KW-0627">Porphyrin biosynthesis</keyword>
<comment type="function">
    <text evidence="1">Catalyzes the decarboxylation of four acetate groups of uroporphyrinogen-III to yield coproporphyrinogen-III.</text>
</comment>
<comment type="catalytic activity">
    <reaction evidence="1">
        <text>uroporphyrinogen III + 4 H(+) = coproporphyrinogen III + 4 CO2</text>
        <dbReference type="Rhea" id="RHEA:19865"/>
        <dbReference type="ChEBI" id="CHEBI:15378"/>
        <dbReference type="ChEBI" id="CHEBI:16526"/>
        <dbReference type="ChEBI" id="CHEBI:57308"/>
        <dbReference type="ChEBI" id="CHEBI:57309"/>
        <dbReference type="EC" id="4.1.1.37"/>
    </reaction>
</comment>
<comment type="pathway">
    <text evidence="1">Porphyrin-containing compound metabolism; protoporphyrin-IX biosynthesis; coproporphyrinogen-III from 5-aminolevulinate: step 4/4.</text>
</comment>
<comment type="subunit">
    <text evidence="1">Homodimer.</text>
</comment>
<comment type="subcellular location">
    <subcellularLocation>
        <location evidence="1">Cytoplasm</location>
    </subcellularLocation>
</comment>
<comment type="similarity">
    <text evidence="1">Belongs to the uroporphyrinogen decarboxylase family.</text>
</comment>
<feature type="chain" id="PRO_1000100016" description="Uroporphyrinogen decarboxylase">
    <location>
        <begin position="1"/>
        <end position="354"/>
    </location>
</feature>
<feature type="binding site" evidence="1">
    <location>
        <begin position="27"/>
        <end position="31"/>
    </location>
    <ligand>
        <name>substrate</name>
    </ligand>
</feature>
<feature type="binding site" evidence="1">
    <location>
        <position position="77"/>
    </location>
    <ligand>
        <name>substrate</name>
    </ligand>
</feature>
<feature type="binding site" evidence="1">
    <location>
        <position position="154"/>
    </location>
    <ligand>
        <name>substrate</name>
    </ligand>
</feature>
<feature type="binding site" evidence="1">
    <location>
        <position position="209"/>
    </location>
    <ligand>
        <name>substrate</name>
    </ligand>
</feature>
<feature type="binding site" evidence="1">
    <location>
        <position position="327"/>
    </location>
    <ligand>
        <name>substrate</name>
    </ligand>
</feature>
<feature type="site" description="Transition state stabilizer" evidence="1">
    <location>
        <position position="77"/>
    </location>
</feature>
<proteinExistence type="inferred from homology"/>
<protein>
    <recommendedName>
        <fullName evidence="1">Uroporphyrinogen decarboxylase</fullName>
        <shortName evidence="1">UPD</shortName>
        <shortName evidence="1">URO-D</shortName>
        <ecNumber evidence="1">4.1.1.37</ecNumber>
    </recommendedName>
</protein>